<keyword id="KW-0687">Ribonucleoprotein</keyword>
<keyword id="KW-0689">Ribosomal protein</keyword>
<keyword id="KW-0694">RNA-binding</keyword>
<keyword id="KW-0699">rRNA-binding</keyword>
<keyword id="KW-0820">tRNA-binding</keyword>
<organism>
    <name type="scientific">Haemophilus influenzae (strain PittEE)</name>
    <dbReference type="NCBI Taxonomy" id="374930"/>
    <lineage>
        <taxon>Bacteria</taxon>
        <taxon>Pseudomonadati</taxon>
        <taxon>Pseudomonadota</taxon>
        <taxon>Gammaproteobacteria</taxon>
        <taxon>Pasteurellales</taxon>
        <taxon>Pasteurellaceae</taxon>
        <taxon>Haemophilus</taxon>
    </lineage>
</organism>
<sequence length="156" mass="17543">MPRRRSVEARKILPDPKFGSELLAKFINVIMVDGKKSVAESIVYGALETLAQRTGKEPLEAFEVALENVRPTVEVKSRRVGGSTYQVPVEVRPVRRNALGMRWIVEAARKRGDKSMALRLANELSDASDNKGAAVKKREDVHRMAEANKAFAHYRW</sequence>
<accession>A5U9Q9</accession>
<comment type="function">
    <text evidence="1">One of the primary rRNA binding proteins, it binds directly to 16S rRNA where it nucleates assembly of the head domain of the 30S subunit. Is located at the subunit interface close to the decoding center, probably blocks exit of the E-site tRNA.</text>
</comment>
<comment type="subunit">
    <text evidence="1">Part of the 30S ribosomal subunit. Contacts proteins S9 and S11.</text>
</comment>
<comment type="similarity">
    <text evidence="1">Belongs to the universal ribosomal protein uS7 family.</text>
</comment>
<dbReference type="EMBL" id="CP000671">
    <property type="protein sequence ID" value="ABQ97510.1"/>
    <property type="molecule type" value="Genomic_DNA"/>
</dbReference>
<dbReference type="SMR" id="A5U9Q9"/>
<dbReference type="KEGG" id="hip:CGSHiEE_00060"/>
<dbReference type="HOGENOM" id="CLU_072226_1_1_6"/>
<dbReference type="GO" id="GO:0015935">
    <property type="term" value="C:small ribosomal subunit"/>
    <property type="evidence" value="ECO:0007669"/>
    <property type="project" value="InterPro"/>
</dbReference>
<dbReference type="GO" id="GO:0019843">
    <property type="term" value="F:rRNA binding"/>
    <property type="evidence" value="ECO:0007669"/>
    <property type="project" value="UniProtKB-UniRule"/>
</dbReference>
<dbReference type="GO" id="GO:0003735">
    <property type="term" value="F:structural constituent of ribosome"/>
    <property type="evidence" value="ECO:0007669"/>
    <property type="project" value="InterPro"/>
</dbReference>
<dbReference type="GO" id="GO:0000049">
    <property type="term" value="F:tRNA binding"/>
    <property type="evidence" value="ECO:0007669"/>
    <property type="project" value="UniProtKB-UniRule"/>
</dbReference>
<dbReference type="GO" id="GO:0006412">
    <property type="term" value="P:translation"/>
    <property type="evidence" value="ECO:0007669"/>
    <property type="project" value="UniProtKB-UniRule"/>
</dbReference>
<dbReference type="CDD" id="cd14869">
    <property type="entry name" value="uS7_Bacteria"/>
    <property type="match status" value="1"/>
</dbReference>
<dbReference type="FunFam" id="1.10.455.10:FF:000001">
    <property type="entry name" value="30S ribosomal protein S7"/>
    <property type="match status" value="1"/>
</dbReference>
<dbReference type="Gene3D" id="1.10.455.10">
    <property type="entry name" value="Ribosomal protein S7 domain"/>
    <property type="match status" value="1"/>
</dbReference>
<dbReference type="HAMAP" id="MF_00480_B">
    <property type="entry name" value="Ribosomal_uS7_B"/>
    <property type="match status" value="1"/>
</dbReference>
<dbReference type="InterPro" id="IPR000235">
    <property type="entry name" value="Ribosomal_uS7"/>
</dbReference>
<dbReference type="InterPro" id="IPR005717">
    <property type="entry name" value="Ribosomal_uS7_bac/org-type"/>
</dbReference>
<dbReference type="InterPro" id="IPR020606">
    <property type="entry name" value="Ribosomal_uS7_CS"/>
</dbReference>
<dbReference type="InterPro" id="IPR023798">
    <property type="entry name" value="Ribosomal_uS7_dom"/>
</dbReference>
<dbReference type="InterPro" id="IPR036823">
    <property type="entry name" value="Ribosomal_uS7_dom_sf"/>
</dbReference>
<dbReference type="NCBIfam" id="TIGR01029">
    <property type="entry name" value="rpsG_bact"/>
    <property type="match status" value="1"/>
</dbReference>
<dbReference type="PANTHER" id="PTHR11205">
    <property type="entry name" value="RIBOSOMAL PROTEIN S7"/>
    <property type="match status" value="1"/>
</dbReference>
<dbReference type="Pfam" id="PF00177">
    <property type="entry name" value="Ribosomal_S7"/>
    <property type="match status" value="1"/>
</dbReference>
<dbReference type="PIRSF" id="PIRSF002122">
    <property type="entry name" value="RPS7p_RPS7a_RPS5e_RPS7o"/>
    <property type="match status" value="1"/>
</dbReference>
<dbReference type="SUPFAM" id="SSF47973">
    <property type="entry name" value="Ribosomal protein S7"/>
    <property type="match status" value="1"/>
</dbReference>
<dbReference type="PROSITE" id="PS00052">
    <property type="entry name" value="RIBOSOMAL_S7"/>
    <property type="match status" value="1"/>
</dbReference>
<name>RS7_HAEIE</name>
<protein>
    <recommendedName>
        <fullName evidence="1">Small ribosomal subunit protein uS7</fullName>
    </recommendedName>
    <alternativeName>
        <fullName evidence="2">30S ribosomal protein S7</fullName>
    </alternativeName>
</protein>
<feature type="chain" id="PRO_1000014200" description="Small ribosomal subunit protein uS7">
    <location>
        <begin position="1"/>
        <end position="156"/>
    </location>
</feature>
<evidence type="ECO:0000255" key="1">
    <source>
        <dbReference type="HAMAP-Rule" id="MF_00480"/>
    </source>
</evidence>
<evidence type="ECO:0000305" key="2"/>
<gene>
    <name evidence="1" type="primary">rpsG</name>
    <name type="ordered locus">CGSHiEE_00060</name>
</gene>
<proteinExistence type="inferred from homology"/>
<reference key="1">
    <citation type="journal article" date="2007" name="Genome Biol.">
        <title>Characterization and modeling of the Haemophilus influenzae core and supragenomes based on the complete genomic sequences of Rd and 12 clinical nontypeable strains.</title>
        <authorList>
            <person name="Hogg J.S."/>
            <person name="Hu F.Z."/>
            <person name="Janto B."/>
            <person name="Boissy R."/>
            <person name="Hayes J."/>
            <person name="Keefe R."/>
            <person name="Post J.C."/>
            <person name="Ehrlich G.D."/>
        </authorList>
    </citation>
    <scope>NUCLEOTIDE SEQUENCE [LARGE SCALE GENOMIC DNA]</scope>
    <source>
        <strain>PittEE</strain>
    </source>
</reference>